<accession>P34803</accession>
<sequence length="307" mass="30126">MKIDKEDDQQQQMRRVAFFAVAVSTAAVISSIVTLPMIYSYVQSFQSHLIMETEFCKTRARDMWVEMQVLHKSGVTRSRRDAGYKEGSGSGGSGSGGYGGPTGAGADIGPTCCPCQQGPAGPPGPAGDTGPNGNDGHHGAPGVPGKEGSILSSALPPSEPCIICPPGPQGAVGQQGPKGPPGPKGKSQERAADGKNGEPGMIGPPGPPGGVGEPGPPGPAGQPGRVIQVNGAAGPAGPRGVKGPPGPKGLPGIAGLTEIGGQGPPGDAGGPGPVGGQGPPGPQGPQGPPGDEGSCDHCPEPRTPPGY</sequence>
<comment type="function">
    <text>Nematode cuticles are composed largely of collagen-like proteins. The cuticle functions both as an exoskeleton and as a barrier to protect the worm from its environment.</text>
</comment>
<comment type="subunit">
    <text>Collagen polypeptide chains are complexed within the cuticle by disulfide bonds and other types of covalent cross-links.</text>
</comment>
<comment type="similarity">
    <text evidence="2">Belongs to the cuticular collagen family.</text>
</comment>
<evidence type="ECO:0000256" key="1">
    <source>
        <dbReference type="SAM" id="MobiDB-lite"/>
    </source>
</evidence>
<evidence type="ECO:0000305" key="2"/>
<dbReference type="EMBL" id="L15418">
    <property type="protein sequence ID" value="AAA17445.1"/>
    <property type="molecule type" value="Unassigned_DNA"/>
</dbReference>
<dbReference type="EMBL" id="FO080695">
    <property type="protein sequence ID" value="CCD65892.1"/>
    <property type="molecule type" value="Genomic_DNA"/>
</dbReference>
<dbReference type="PIR" id="T37287">
    <property type="entry name" value="T37287"/>
</dbReference>
<dbReference type="RefSeq" id="NP_495487.1">
    <property type="nucleotide sequence ID" value="NM_063086.6"/>
</dbReference>
<dbReference type="FunCoup" id="P34803">
    <property type="interactions" value="1535"/>
</dbReference>
<dbReference type="STRING" id="6239.C27H5.5c.1"/>
<dbReference type="PaxDb" id="6239-C27H5.5a"/>
<dbReference type="EnsemblMetazoa" id="C27H5.5.1">
    <property type="protein sequence ID" value="C27H5.5.1"/>
    <property type="gene ID" value="WBGene00000613"/>
</dbReference>
<dbReference type="GeneID" id="174178"/>
<dbReference type="KEGG" id="cel:CELE_C27H5.5"/>
<dbReference type="UCSC" id="C27H5.5">
    <property type="organism name" value="c. elegans"/>
</dbReference>
<dbReference type="AGR" id="WB:WBGene00000613"/>
<dbReference type="CTD" id="174178"/>
<dbReference type="WormBase" id="C27H5.5">
    <property type="protein sequence ID" value="CE06893"/>
    <property type="gene ID" value="WBGene00000613"/>
    <property type="gene designation" value="col-36"/>
</dbReference>
<dbReference type="eggNOG" id="KOG3544">
    <property type="taxonomic scope" value="Eukaryota"/>
</dbReference>
<dbReference type="GeneTree" id="ENSGT00970000196361"/>
<dbReference type="HOGENOM" id="CLU_001074_4_2_1"/>
<dbReference type="InParanoid" id="P34803"/>
<dbReference type="OMA" id="EEGSCDH"/>
<dbReference type="OrthoDB" id="5873396at2759"/>
<dbReference type="PRO" id="PR:P34803"/>
<dbReference type="Proteomes" id="UP000001940">
    <property type="component" value="Chromosome II"/>
</dbReference>
<dbReference type="Bgee" id="WBGene00000613">
    <property type="expression patterns" value="Expressed in material anatomical entity and 2 other cell types or tissues"/>
</dbReference>
<dbReference type="GO" id="GO:0005581">
    <property type="term" value="C:collagen trimer"/>
    <property type="evidence" value="ECO:0007669"/>
    <property type="project" value="UniProtKB-KW"/>
</dbReference>
<dbReference type="GO" id="GO:0042302">
    <property type="term" value="F:structural constituent of cuticle"/>
    <property type="evidence" value="ECO:0007669"/>
    <property type="project" value="UniProtKB-KW"/>
</dbReference>
<dbReference type="InterPro" id="IPR002486">
    <property type="entry name" value="Col_cuticle_N"/>
</dbReference>
<dbReference type="InterPro" id="IPR008160">
    <property type="entry name" value="Collagen"/>
</dbReference>
<dbReference type="PANTHER" id="PTHR24637">
    <property type="entry name" value="COLLAGEN"/>
    <property type="match status" value="1"/>
</dbReference>
<dbReference type="PANTHER" id="PTHR24637:SF368">
    <property type="entry name" value="CUTICLE COLLAGEN 36"/>
    <property type="match status" value="1"/>
</dbReference>
<dbReference type="Pfam" id="PF01484">
    <property type="entry name" value="Col_cuticle_N"/>
    <property type="match status" value="1"/>
</dbReference>
<dbReference type="Pfam" id="PF01391">
    <property type="entry name" value="Collagen"/>
    <property type="match status" value="1"/>
</dbReference>
<dbReference type="SMART" id="SM01088">
    <property type="entry name" value="Col_cuticle_N"/>
    <property type="match status" value="1"/>
</dbReference>
<organism>
    <name type="scientific">Caenorhabditis elegans</name>
    <dbReference type="NCBI Taxonomy" id="6239"/>
    <lineage>
        <taxon>Eukaryota</taxon>
        <taxon>Metazoa</taxon>
        <taxon>Ecdysozoa</taxon>
        <taxon>Nematoda</taxon>
        <taxon>Chromadorea</taxon>
        <taxon>Rhabditida</taxon>
        <taxon>Rhabditina</taxon>
        <taxon>Rhabditomorpha</taxon>
        <taxon>Rhabditoidea</taxon>
        <taxon>Rhabditidae</taxon>
        <taxon>Peloderinae</taxon>
        <taxon>Caenorhabditis</taxon>
    </lineage>
</organism>
<name>COL36_CAEEL</name>
<proteinExistence type="inferred from homology"/>
<gene>
    <name type="primary">col-36</name>
    <name type="ORF">C27H5.5</name>
</gene>
<keyword id="KW-0176">Collagen</keyword>
<keyword id="KW-0193">Cuticle</keyword>
<keyword id="KW-1015">Disulfide bond</keyword>
<keyword id="KW-1185">Reference proteome</keyword>
<keyword id="KW-0677">Repeat</keyword>
<reference key="1">
    <citation type="journal article" date="1993" name="Gene">
        <title>Identification, sequence and expression patterns of the Caenorhabditis elegans col-36 and col-40 collagen-encoding genes.</title>
        <authorList>
            <person name="Levy A.D."/>
            <person name="Kramer J.M."/>
        </authorList>
    </citation>
    <scope>NUCLEOTIDE SEQUENCE [GENOMIC DNA]</scope>
    <source>
        <strain>Bristol N2</strain>
    </source>
</reference>
<reference key="2">
    <citation type="journal article" date="1998" name="Science">
        <title>Genome sequence of the nematode C. elegans: a platform for investigating biology.</title>
        <authorList>
            <consortium name="The C. elegans sequencing consortium"/>
        </authorList>
    </citation>
    <scope>NUCLEOTIDE SEQUENCE [LARGE SCALE GENOMIC DNA]</scope>
    <source>
        <strain>Bristol N2</strain>
    </source>
</reference>
<protein>
    <recommendedName>
        <fullName>Cuticle collagen 36</fullName>
    </recommendedName>
</protein>
<feature type="chain" id="PRO_0000127593" description="Cuticle collagen 36">
    <location>
        <begin position="1"/>
        <end position="307"/>
    </location>
</feature>
<feature type="region of interest" description="Disordered" evidence="1">
    <location>
        <begin position="76"/>
        <end position="102"/>
    </location>
</feature>
<feature type="region of interest" description="Triple-helical region">
    <location>
        <begin position="89"/>
        <end position="105"/>
    </location>
</feature>
<feature type="region of interest" description="Disordered" evidence="1">
    <location>
        <begin position="116"/>
        <end position="307"/>
    </location>
</feature>
<feature type="region of interest" description="Triple-helical region">
    <location>
        <begin position="118"/>
        <end position="150"/>
    </location>
</feature>
<feature type="region of interest" description="Triple-helical region">
    <location>
        <begin position="167"/>
        <end position="187"/>
    </location>
</feature>
<feature type="region of interest" description="Triple-helical region">
    <location>
        <begin position="194"/>
        <end position="226"/>
    </location>
</feature>
<feature type="region of interest" description="Triple-helical region">
    <location>
        <begin position="231"/>
        <end position="257"/>
    </location>
</feature>
<feature type="region of interest" description="Triple-helical region">
    <location>
        <begin position="260"/>
        <end position="295"/>
    </location>
</feature>
<feature type="compositionally biased region" description="Gly residues" evidence="1">
    <location>
        <begin position="86"/>
        <end position="102"/>
    </location>
</feature>
<feature type="compositionally biased region" description="Pro residues" evidence="1">
    <location>
        <begin position="157"/>
        <end position="168"/>
    </location>
</feature>
<feature type="compositionally biased region" description="Basic and acidic residues" evidence="1">
    <location>
        <begin position="186"/>
        <end position="196"/>
    </location>
</feature>
<feature type="compositionally biased region" description="Pro residues" evidence="1">
    <location>
        <begin position="202"/>
        <end position="220"/>
    </location>
</feature>
<feature type="compositionally biased region" description="Low complexity" evidence="1">
    <location>
        <begin position="231"/>
        <end position="242"/>
    </location>
</feature>
<feature type="compositionally biased region" description="Gly residues" evidence="1">
    <location>
        <begin position="258"/>
        <end position="278"/>
    </location>
</feature>
<feature type="compositionally biased region" description="Pro residues" evidence="1">
    <location>
        <begin position="279"/>
        <end position="288"/>
    </location>
</feature>